<organism>
    <name type="scientific">Bacillus subtilis (strain 168)</name>
    <dbReference type="NCBI Taxonomy" id="224308"/>
    <lineage>
        <taxon>Bacteria</taxon>
        <taxon>Bacillati</taxon>
        <taxon>Bacillota</taxon>
        <taxon>Bacilli</taxon>
        <taxon>Bacillales</taxon>
        <taxon>Bacillaceae</taxon>
        <taxon>Bacillus</taxon>
    </lineage>
</organism>
<evidence type="ECO:0000250" key="1"/>
<evidence type="ECO:0000269" key="2">
    <source>
    </source>
</evidence>
<evidence type="ECO:0000305" key="3"/>
<protein>
    <recommendedName>
        <fullName>Peptidase T</fullName>
        <ecNumber>3.4.11.4</ecNumber>
    </recommendedName>
    <alternativeName>
        <fullName>Aminotripeptidase</fullName>
        <shortName>Tripeptidase</shortName>
    </alternativeName>
    <alternativeName>
        <fullName>Tripeptide aminopeptidase</fullName>
    </alternativeName>
</protein>
<name>PEPT_BACSU</name>
<accession>P55179</accession>
<comment type="function">
    <text evidence="2">Cleaves the N-terminal amino acid of tripeptides.</text>
</comment>
<comment type="catalytic activity">
    <reaction>
        <text>Release of the N-terminal residue from a tripeptide.</text>
        <dbReference type="EC" id="3.4.11.4"/>
    </reaction>
</comment>
<comment type="cofactor">
    <cofactor evidence="2">
        <name>Zn(2+)</name>
        <dbReference type="ChEBI" id="CHEBI:29105"/>
    </cofactor>
    <text evidence="2">Binds 2 Zn(2+) ions per subunit.</text>
</comment>
<comment type="subcellular location">
    <subcellularLocation>
        <location>Cytoplasm</location>
    </subcellularLocation>
</comment>
<comment type="similarity">
    <text evidence="3">Belongs to the peptidase M20B family.</text>
</comment>
<dbReference type="EC" id="3.4.11.4"/>
<dbReference type="EMBL" id="X99339">
    <property type="protein sequence ID" value="CAA67718.1"/>
    <property type="molecule type" value="Genomic_DNA"/>
</dbReference>
<dbReference type="EMBL" id="D83026">
    <property type="protein sequence ID" value="BAA11712.1"/>
    <property type="molecule type" value="Genomic_DNA"/>
</dbReference>
<dbReference type="EMBL" id="AL009126">
    <property type="protein sequence ID" value="CAB15918.1"/>
    <property type="molecule type" value="Genomic_DNA"/>
</dbReference>
<dbReference type="PIR" id="H69674">
    <property type="entry name" value="H69674"/>
</dbReference>
<dbReference type="RefSeq" id="NP_391771.1">
    <property type="nucleotide sequence ID" value="NC_000964.3"/>
</dbReference>
<dbReference type="RefSeq" id="WP_003244314.1">
    <property type="nucleotide sequence ID" value="NZ_OZ025638.1"/>
</dbReference>
<dbReference type="SMR" id="P55179"/>
<dbReference type="FunCoup" id="P55179">
    <property type="interactions" value="21"/>
</dbReference>
<dbReference type="STRING" id="224308.BSU38920"/>
<dbReference type="MEROPS" id="M20.003"/>
<dbReference type="jPOST" id="P55179"/>
<dbReference type="PaxDb" id="224308-BSU38920"/>
<dbReference type="EnsemblBacteria" id="CAB15918">
    <property type="protein sequence ID" value="CAB15918"/>
    <property type="gene ID" value="BSU_38920"/>
</dbReference>
<dbReference type="GeneID" id="937428"/>
<dbReference type="KEGG" id="bsu:BSU38920"/>
<dbReference type="PATRIC" id="fig|224308.179.peg.4211"/>
<dbReference type="eggNOG" id="COG2195">
    <property type="taxonomic scope" value="Bacteria"/>
</dbReference>
<dbReference type="InParanoid" id="P55179"/>
<dbReference type="OrthoDB" id="9804934at2"/>
<dbReference type="PhylomeDB" id="P55179"/>
<dbReference type="BioCyc" id="BSUB:BSU38920-MONOMER"/>
<dbReference type="Proteomes" id="UP000001570">
    <property type="component" value="Chromosome"/>
</dbReference>
<dbReference type="GO" id="GO:0005829">
    <property type="term" value="C:cytosol"/>
    <property type="evidence" value="ECO:0000318"/>
    <property type="project" value="GO_Central"/>
</dbReference>
<dbReference type="GO" id="GO:0008237">
    <property type="term" value="F:metallopeptidase activity"/>
    <property type="evidence" value="ECO:0007669"/>
    <property type="project" value="UniProtKB-KW"/>
</dbReference>
<dbReference type="GO" id="GO:0045148">
    <property type="term" value="F:tripeptide aminopeptidase activity"/>
    <property type="evidence" value="ECO:0000318"/>
    <property type="project" value="GO_Central"/>
</dbReference>
<dbReference type="GO" id="GO:0008270">
    <property type="term" value="F:zinc ion binding"/>
    <property type="evidence" value="ECO:0007669"/>
    <property type="project" value="UniProtKB-UniRule"/>
</dbReference>
<dbReference type="GO" id="GO:0043171">
    <property type="term" value="P:peptide catabolic process"/>
    <property type="evidence" value="ECO:0007669"/>
    <property type="project" value="UniProtKB-UniRule"/>
</dbReference>
<dbReference type="GO" id="GO:0006508">
    <property type="term" value="P:proteolysis"/>
    <property type="evidence" value="ECO:0007669"/>
    <property type="project" value="UniProtKB-UniRule"/>
</dbReference>
<dbReference type="CDD" id="cd03892">
    <property type="entry name" value="M20_peptT"/>
    <property type="match status" value="1"/>
</dbReference>
<dbReference type="FunFam" id="3.30.70.360:FF:000002">
    <property type="entry name" value="Peptidase T"/>
    <property type="match status" value="1"/>
</dbReference>
<dbReference type="Gene3D" id="3.30.70.360">
    <property type="match status" value="1"/>
</dbReference>
<dbReference type="Gene3D" id="3.40.630.10">
    <property type="entry name" value="Zn peptidases"/>
    <property type="match status" value="1"/>
</dbReference>
<dbReference type="HAMAP" id="MF_00550">
    <property type="entry name" value="Aminopeptidase_M20"/>
    <property type="match status" value="1"/>
</dbReference>
<dbReference type="InterPro" id="IPR001261">
    <property type="entry name" value="ArgE/DapE_CS"/>
</dbReference>
<dbReference type="InterPro" id="IPR036264">
    <property type="entry name" value="Bact_exopeptidase_dim_dom"/>
</dbReference>
<dbReference type="InterPro" id="IPR002933">
    <property type="entry name" value="Peptidase_M20"/>
</dbReference>
<dbReference type="InterPro" id="IPR011650">
    <property type="entry name" value="Peptidase_M20_dimer"/>
</dbReference>
<dbReference type="InterPro" id="IPR010161">
    <property type="entry name" value="Peptidase_M20B"/>
</dbReference>
<dbReference type="NCBIfam" id="TIGR01882">
    <property type="entry name" value="peptidase-T"/>
    <property type="match status" value="1"/>
</dbReference>
<dbReference type="NCBIfam" id="NF003976">
    <property type="entry name" value="PRK05469.1"/>
    <property type="match status" value="1"/>
</dbReference>
<dbReference type="NCBIfam" id="NF009920">
    <property type="entry name" value="PRK13381.1"/>
    <property type="match status" value="1"/>
</dbReference>
<dbReference type="PANTHER" id="PTHR42994">
    <property type="entry name" value="PEPTIDASE T"/>
    <property type="match status" value="1"/>
</dbReference>
<dbReference type="PANTHER" id="PTHR42994:SF1">
    <property type="entry name" value="PEPTIDASE T"/>
    <property type="match status" value="1"/>
</dbReference>
<dbReference type="Pfam" id="PF07687">
    <property type="entry name" value="M20_dimer"/>
    <property type="match status" value="1"/>
</dbReference>
<dbReference type="Pfam" id="PF01546">
    <property type="entry name" value="Peptidase_M20"/>
    <property type="match status" value="1"/>
</dbReference>
<dbReference type="PIRSF" id="PIRSF037215">
    <property type="entry name" value="Peptidase_M20B"/>
    <property type="match status" value="1"/>
</dbReference>
<dbReference type="SUPFAM" id="SSF55031">
    <property type="entry name" value="Bacterial exopeptidase dimerisation domain"/>
    <property type="match status" value="1"/>
</dbReference>
<dbReference type="SUPFAM" id="SSF53187">
    <property type="entry name" value="Zn-dependent exopeptidases"/>
    <property type="match status" value="1"/>
</dbReference>
<dbReference type="PROSITE" id="PS00758">
    <property type="entry name" value="ARGE_DAPE_CPG2_1"/>
    <property type="match status" value="1"/>
</dbReference>
<dbReference type="PROSITE" id="PS00759">
    <property type="entry name" value="ARGE_DAPE_CPG2_2"/>
    <property type="match status" value="1"/>
</dbReference>
<reference key="1">
    <citation type="journal article" date="1996" name="FEMS Microbiol. Lett.">
        <title>Expression of a pepT homologue from Bacillus subtilis.</title>
        <authorList>
            <person name="Schroegel O."/>
            <person name="Krispin O."/>
            <person name="Allmansberger R."/>
        </authorList>
    </citation>
    <scope>NUCLEOTIDE SEQUENCE [GENOMIC DNA]</scope>
    <source>
        <strain>168</strain>
    </source>
</reference>
<reference key="2">
    <citation type="journal article" date="1996" name="Microbiology">
        <title>Sequencing of a 65 kb region of the Bacillus subtilis genome containing the lic and cel loci, and creation of a 177 kb contig covering the gnt-sacXY region.</title>
        <authorList>
            <person name="Yoshida K."/>
            <person name="Shindo K."/>
            <person name="Sano H."/>
            <person name="Seki S."/>
            <person name="Fujimura M."/>
            <person name="Yanai N."/>
            <person name="Miwa Y."/>
            <person name="Fujita Y."/>
        </authorList>
    </citation>
    <scope>NUCLEOTIDE SEQUENCE [GENOMIC DNA]</scope>
    <source>
        <strain>168 / BGSC1A1</strain>
    </source>
</reference>
<reference key="3">
    <citation type="journal article" date="1997" name="Nature">
        <title>The complete genome sequence of the Gram-positive bacterium Bacillus subtilis.</title>
        <authorList>
            <person name="Kunst F."/>
            <person name="Ogasawara N."/>
            <person name="Moszer I."/>
            <person name="Albertini A.M."/>
            <person name="Alloni G."/>
            <person name="Azevedo V."/>
            <person name="Bertero M.G."/>
            <person name="Bessieres P."/>
            <person name="Bolotin A."/>
            <person name="Borchert S."/>
            <person name="Borriss R."/>
            <person name="Boursier L."/>
            <person name="Brans A."/>
            <person name="Braun M."/>
            <person name="Brignell S.C."/>
            <person name="Bron S."/>
            <person name="Brouillet S."/>
            <person name="Bruschi C.V."/>
            <person name="Caldwell B."/>
            <person name="Capuano V."/>
            <person name="Carter N.M."/>
            <person name="Choi S.-K."/>
            <person name="Codani J.-J."/>
            <person name="Connerton I.F."/>
            <person name="Cummings N.J."/>
            <person name="Daniel R.A."/>
            <person name="Denizot F."/>
            <person name="Devine K.M."/>
            <person name="Duesterhoeft A."/>
            <person name="Ehrlich S.D."/>
            <person name="Emmerson P.T."/>
            <person name="Entian K.-D."/>
            <person name="Errington J."/>
            <person name="Fabret C."/>
            <person name="Ferrari E."/>
            <person name="Foulger D."/>
            <person name="Fritz C."/>
            <person name="Fujita M."/>
            <person name="Fujita Y."/>
            <person name="Fuma S."/>
            <person name="Galizzi A."/>
            <person name="Galleron N."/>
            <person name="Ghim S.-Y."/>
            <person name="Glaser P."/>
            <person name="Goffeau A."/>
            <person name="Golightly E.J."/>
            <person name="Grandi G."/>
            <person name="Guiseppi G."/>
            <person name="Guy B.J."/>
            <person name="Haga K."/>
            <person name="Haiech J."/>
            <person name="Harwood C.R."/>
            <person name="Henaut A."/>
            <person name="Hilbert H."/>
            <person name="Holsappel S."/>
            <person name="Hosono S."/>
            <person name="Hullo M.-F."/>
            <person name="Itaya M."/>
            <person name="Jones L.-M."/>
            <person name="Joris B."/>
            <person name="Karamata D."/>
            <person name="Kasahara Y."/>
            <person name="Klaerr-Blanchard M."/>
            <person name="Klein C."/>
            <person name="Kobayashi Y."/>
            <person name="Koetter P."/>
            <person name="Koningstein G."/>
            <person name="Krogh S."/>
            <person name="Kumano M."/>
            <person name="Kurita K."/>
            <person name="Lapidus A."/>
            <person name="Lardinois S."/>
            <person name="Lauber J."/>
            <person name="Lazarevic V."/>
            <person name="Lee S.-M."/>
            <person name="Levine A."/>
            <person name="Liu H."/>
            <person name="Masuda S."/>
            <person name="Mauel C."/>
            <person name="Medigue C."/>
            <person name="Medina N."/>
            <person name="Mellado R.P."/>
            <person name="Mizuno M."/>
            <person name="Moestl D."/>
            <person name="Nakai S."/>
            <person name="Noback M."/>
            <person name="Noone D."/>
            <person name="O'Reilly M."/>
            <person name="Ogawa K."/>
            <person name="Ogiwara A."/>
            <person name="Oudega B."/>
            <person name="Park S.-H."/>
            <person name="Parro V."/>
            <person name="Pohl T.M."/>
            <person name="Portetelle D."/>
            <person name="Porwollik S."/>
            <person name="Prescott A.M."/>
            <person name="Presecan E."/>
            <person name="Pujic P."/>
            <person name="Purnelle B."/>
            <person name="Rapoport G."/>
            <person name="Rey M."/>
            <person name="Reynolds S."/>
            <person name="Rieger M."/>
            <person name="Rivolta C."/>
            <person name="Rocha E."/>
            <person name="Roche B."/>
            <person name="Rose M."/>
            <person name="Sadaie Y."/>
            <person name="Sato T."/>
            <person name="Scanlan E."/>
            <person name="Schleich S."/>
            <person name="Schroeter R."/>
            <person name="Scoffone F."/>
            <person name="Sekiguchi J."/>
            <person name="Sekowska A."/>
            <person name="Seror S.J."/>
            <person name="Serror P."/>
            <person name="Shin B.-S."/>
            <person name="Soldo B."/>
            <person name="Sorokin A."/>
            <person name="Tacconi E."/>
            <person name="Takagi T."/>
            <person name="Takahashi H."/>
            <person name="Takemaru K."/>
            <person name="Takeuchi M."/>
            <person name="Tamakoshi A."/>
            <person name="Tanaka T."/>
            <person name="Terpstra P."/>
            <person name="Tognoni A."/>
            <person name="Tosato V."/>
            <person name="Uchiyama S."/>
            <person name="Vandenbol M."/>
            <person name="Vannier F."/>
            <person name="Vassarotti A."/>
            <person name="Viari A."/>
            <person name="Wambutt R."/>
            <person name="Wedler E."/>
            <person name="Wedler H."/>
            <person name="Weitzenegger T."/>
            <person name="Winters P."/>
            <person name="Wipat A."/>
            <person name="Yamamoto H."/>
            <person name="Yamane K."/>
            <person name="Yasumoto K."/>
            <person name="Yata K."/>
            <person name="Yoshida K."/>
            <person name="Yoshikawa H.-F."/>
            <person name="Zumstein E."/>
            <person name="Yoshikawa H."/>
            <person name="Danchin A."/>
        </authorList>
    </citation>
    <scope>NUCLEOTIDE SEQUENCE [LARGE SCALE GENOMIC DNA]</scope>
    <source>
        <strain>168</strain>
    </source>
</reference>
<reference key="4">
    <citation type="journal article" date="2000" name="Mol. Cells">
        <title>The biochemical and molecular characterization of recombinant Bacillus subtilis tripeptidase (PepT) as a zinc-dependent metalloenzyme.</title>
        <authorList>
            <person name="Cha M.H."/>
            <person name="Yong W.M."/>
            <person name="Lee S.M."/>
            <person name="Lee Y.S."/>
            <person name="Chung I.Y."/>
        </authorList>
    </citation>
    <scope>FUNCTION</scope>
    <scope>COFACTOR</scope>
</reference>
<sequence>MKEEIIERFTTYVKVDTQSDESVDTCPSTPGQLTLGNMLVDELKSIGMQDAAIDENGYVMATLPSNTEKDVPTIGFLAHVDTATDFTGKNVNPQIIESYDGKDIVLNEQLQVTLSPDQFPELSGYKGHTLITTDGTTLLGADNKAGIAEIMTAMDYLIKHPEIKHGTIRVAFTPDEEIGRGPHKFDVKRFNASFAYTVDGGPLGELEYESFNAAAAKITIKGNNVHPGTAKGKMINSAKIAMKLNSLLPADEAPEYTEGYEGFYHLLSIQGDVEETKLHYIIRDFDKENFQNRKETMKRAVEELQNEYGQDRILLDMNDQYYNMREKIEPVIEIVNIAKQAMENLGIEPKISPIRGGTDGSQLSYMGLPTPNIFTGGENFHGKFEYISVDNMVKAVNVIVEIAKQFEAQA</sequence>
<keyword id="KW-0031">Aminopeptidase</keyword>
<keyword id="KW-0963">Cytoplasm</keyword>
<keyword id="KW-0378">Hydrolase</keyword>
<keyword id="KW-0479">Metal-binding</keyword>
<keyword id="KW-0482">Metalloprotease</keyword>
<keyword id="KW-0645">Protease</keyword>
<keyword id="KW-1185">Reference proteome</keyword>
<keyword id="KW-0862">Zinc</keyword>
<proteinExistence type="inferred from homology"/>
<gene>
    <name type="primary">pepT</name>
    <name type="ordered locus">BSU38920</name>
</gene>
<feature type="chain" id="PRO_0000185283" description="Peptidase T">
    <location>
        <begin position="1"/>
        <end position="410"/>
    </location>
</feature>
<feature type="active site" evidence="1">
    <location>
        <position position="81"/>
    </location>
</feature>
<feature type="active site" description="Proton acceptor" evidence="1">
    <location>
        <position position="176"/>
    </location>
</feature>
<feature type="binding site" evidence="1">
    <location>
        <position position="79"/>
    </location>
    <ligand>
        <name>Zn(2+)</name>
        <dbReference type="ChEBI" id="CHEBI:29105"/>
        <label>1</label>
    </ligand>
</feature>
<feature type="binding site" evidence="1">
    <location>
        <position position="142"/>
    </location>
    <ligand>
        <name>Zn(2+)</name>
        <dbReference type="ChEBI" id="CHEBI:29105"/>
        <label>1</label>
    </ligand>
</feature>
<feature type="binding site" evidence="1">
    <location>
        <position position="142"/>
    </location>
    <ligand>
        <name>Zn(2+)</name>
        <dbReference type="ChEBI" id="CHEBI:29105"/>
        <label>2</label>
    </ligand>
</feature>
<feature type="binding site" evidence="1">
    <location>
        <position position="177"/>
    </location>
    <ligand>
        <name>Zn(2+)</name>
        <dbReference type="ChEBI" id="CHEBI:29105"/>
        <label>2</label>
    </ligand>
</feature>
<feature type="binding site" evidence="1">
    <location>
        <position position="199"/>
    </location>
    <ligand>
        <name>Zn(2+)</name>
        <dbReference type="ChEBI" id="CHEBI:29105"/>
        <label>1</label>
    </ligand>
</feature>
<feature type="binding site" evidence="1">
    <location>
        <position position="381"/>
    </location>
    <ligand>
        <name>Zn(2+)</name>
        <dbReference type="ChEBI" id="CHEBI:29105"/>
        <label>2</label>
    </ligand>
</feature>